<keyword id="KW-1003">Cell membrane</keyword>
<keyword id="KW-0449">Lipoprotein</keyword>
<keyword id="KW-0464">Manganese</keyword>
<keyword id="KW-0472">Membrane</keyword>
<keyword id="KW-0479">Metal-binding</keyword>
<keyword id="KW-0564">Palmitate</keyword>
<keyword id="KW-0732">Signal</keyword>
<keyword id="KW-0813">Transport</keyword>
<proteinExistence type="evidence at transcript level"/>
<name>MTSA_STRGN</name>
<gene>
    <name evidence="5" type="primary">scaA</name>
</gene>
<reference key="1">
    <citation type="journal article" date="1994" name="Infect. Immun.">
        <title>Nucleotide sequence of the Streptococcus gordonii PK488 coaggregation adhesin gene, scaA, and ATP-binding cassette.</title>
        <authorList>
            <person name="Kolenbrander P.E."/>
            <person name="Andersen R.N."/>
            <person name="Ganeshkumar N."/>
        </authorList>
    </citation>
    <scope>NUCLEOTIDE SEQUENCE [GENOMIC DNA]</scope>
    <scope>FUNCTION</scope>
    <source>
        <strain>ATCC 51656 / PK488</strain>
    </source>
</reference>
<reference key="2">
    <citation type="journal article" date="1998" name="J. Bacteriol.">
        <title>The adhesion-associated sca operon in Streptococcus gordonii encodes an inducible high-affinity ABC transporter for Mn2+ uptake.</title>
        <authorList>
            <person name="Kolenbrander P.E."/>
            <person name="Andersen R.N."/>
            <person name="Baker R.A."/>
            <person name="Jenkinson H.F."/>
        </authorList>
    </citation>
    <scope>FUNCTION</scope>
    <scope>INDUCTION</scope>
    <scope>DISRUPTION PHENOTYPE</scope>
    <source>
        <strain>ATCC 51656 / PK488</strain>
        <strain>Challis / ATCC 35105 / BCRC 15272 / CH1 / DL1 / V288</strain>
    </source>
</reference>
<protein>
    <recommendedName>
        <fullName evidence="6">Manganese ABC transporter substrate-binding lipoprotein scaA</fullName>
    </recommendedName>
    <alternativeName>
        <fullName evidence="5">Coaggregation-mediating adhesin</fullName>
    </alternativeName>
</protein>
<comment type="function">
    <text evidence="3 4">Part of ATP-binding cassette (ABC) transport system ScaABC involved in manganese import. Essential for growth under Mn(2+)-limiting conditions (PubMed:9440518). Also acts as an adhesin which is involved on adherence to extracellular matrix. It is an important factor in pathogenesis and infection (PubMed:7927711).</text>
</comment>
<comment type="subunit">
    <text evidence="6">The complex is composed of two ATP-binding proteins (ScaC), two transmembrane proteins (ScaB) and a solute-binding protein (ScaA).</text>
</comment>
<comment type="subcellular location">
    <subcellularLocation>
        <location evidence="2">Cell membrane</location>
        <topology evidence="2">Lipid-anchor</topology>
    </subcellularLocation>
</comment>
<comment type="induction">
    <text evidence="4">Induced at low concentrations of extracellular Mn(2+) and by the addition of Zn(2+).</text>
</comment>
<comment type="disruption phenotype">
    <text evidence="4">Inactivation of the gene results in both impaired growth and strong inhibition of Mn(2+) uptake.</text>
</comment>
<comment type="similarity">
    <text evidence="6">Belongs to the bacterial solute-binding protein 9 family. Lipoprotein receptor antigen (Lrai) subfamily.</text>
</comment>
<accession>P42364</accession>
<sequence>MKKCRFLVLLLLAFVGLAACSSQKSSTDSSSSKLNVVATNSIIADITKNIAGDKINLHSIVPVGQDPHKYEPLPEDVKKTSKADLIFYNGINLETGGNAWFTKLVENAQKKENKDYYAVSEGVDVIYLEGQNEKGKEDPHAWLNLENGIIYAQNIAKRLIEKDPDNKATYEKNLKAYIEKLTALDKEAKEKFNNIPEEKKMIVTSEGCPKYFSKAYNVPSAYIWEINTEEEGTPDQIKSLVEKLRKTKVPSLFVESSVDDRPMKTVSKDTNIPIYAKIFTDSIAEKGEDGDSYYSMMKYNLDKISEGLAK</sequence>
<dbReference type="EMBL" id="L11577">
    <property type="protein sequence ID" value="AAA71947.1"/>
    <property type="molecule type" value="Genomic_DNA"/>
</dbReference>
<dbReference type="PIR" id="T11551">
    <property type="entry name" value="T11551"/>
</dbReference>
<dbReference type="SMR" id="P42364"/>
<dbReference type="TCDB" id="3.A.1.15.2">
    <property type="family name" value="the atp-binding cassette (abc) superfamily"/>
</dbReference>
<dbReference type="GO" id="GO:0005886">
    <property type="term" value="C:plasma membrane"/>
    <property type="evidence" value="ECO:0007669"/>
    <property type="project" value="UniProtKB-SubCell"/>
</dbReference>
<dbReference type="GO" id="GO:0046872">
    <property type="term" value="F:metal ion binding"/>
    <property type="evidence" value="ECO:0007669"/>
    <property type="project" value="UniProtKB-KW"/>
</dbReference>
<dbReference type="GO" id="GO:0007155">
    <property type="term" value="P:cell adhesion"/>
    <property type="evidence" value="ECO:0007669"/>
    <property type="project" value="InterPro"/>
</dbReference>
<dbReference type="GO" id="GO:0030001">
    <property type="term" value="P:metal ion transport"/>
    <property type="evidence" value="ECO:0007669"/>
    <property type="project" value="InterPro"/>
</dbReference>
<dbReference type="CDD" id="cd01137">
    <property type="entry name" value="PsaA"/>
    <property type="match status" value="1"/>
</dbReference>
<dbReference type="Gene3D" id="3.40.50.1980">
    <property type="entry name" value="Nitrogenase molybdenum iron protein domain"/>
    <property type="match status" value="2"/>
</dbReference>
<dbReference type="InterPro" id="IPR006129">
    <property type="entry name" value="AdhesinB"/>
</dbReference>
<dbReference type="InterPro" id="IPR050492">
    <property type="entry name" value="Bact_metal-bind_prot9"/>
</dbReference>
<dbReference type="InterPro" id="IPR006128">
    <property type="entry name" value="Lipoprotein_PsaA-like"/>
</dbReference>
<dbReference type="InterPro" id="IPR006127">
    <property type="entry name" value="ZnuA-like"/>
</dbReference>
<dbReference type="NCBIfam" id="NF040928">
    <property type="entry name" value="ABC_lipo_SloC"/>
    <property type="match status" value="1"/>
</dbReference>
<dbReference type="PANTHER" id="PTHR42953">
    <property type="entry name" value="HIGH-AFFINITY ZINC UPTAKE SYSTEM PROTEIN ZNUA-RELATED"/>
    <property type="match status" value="1"/>
</dbReference>
<dbReference type="PANTHER" id="PTHR42953:SF1">
    <property type="entry name" value="METAL-BINDING PROTEIN HI_0362-RELATED"/>
    <property type="match status" value="1"/>
</dbReference>
<dbReference type="Pfam" id="PF01297">
    <property type="entry name" value="ZnuA"/>
    <property type="match status" value="1"/>
</dbReference>
<dbReference type="PRINTS" id="PR00691">
    <property type="entry name" value="ADHESINB"/>
</dbReference>
<dbReference type="PRINTS" id="PR00690">
    <property type="entry name" value="ADHESNFAMILY"/>
</dbReference>
<dbReference type="SUPFAM" id="SSF53807">
    <property type="entry name" value="Helical backbone' metal receptor"/>
    <property type="match status" value="1"/>
</dbReference>
<dbReference type="PROSITE" id="PS51257">
    <property type="entry name" value="PROKAR_LIPOPROTEIN"/>
    <property type="match status" value="1"/>
</dbReference>
<organism>
    <name type="scientific">Streptococcus gordonii</name>
    <dbReference type="NCBI Taxonomy" id="1302"/>
    <lineage>
        <taxon>Bacteria</taxon>
        <taxon>Bacillati</taxon>
        <taxon>Bacillota</taxon>
        <taxon>Bacilli</taxon>
        <taxon>Lactobacillales</taxon>
        <taxon>Streptococcaceae</taxon>
        <taxon>Streptococcus</taxon>
    </lineage>
</organism>
<feature type="signal peptide" evidence="2">
    <location>
        <begin position="1"/>
        <end position="19"/>
    </location>
</feature>
<feature type="chain" id="PRO_0000031886" description="Manganese ABC transporter substrate-binding lipoprotein scaA">
    <location>
        <begin position="20"/>
        <end position="310"/>
    </location>
</feature>
<feature type="binding site" evidence="1">
    <location>
        <position position="68"/>
    </location>
    <ligand>
        <name>Mn(2+)</name>
        <dbReference type="ChEBI" id="CHEBI:29035"/>
    </ligand>
</feature>
<feature type="binding site" evidence="1">
    <location>
        <position position="140"/>
    </location>
    <ligand>
        <name>Mn(2+)</name>
        <dbReference type="ChEBI" id="CHEBI:29035"/>
    </ligand>
</feature>
<feature type="binding site" evidence="1">
    <location>
        <position position="206"/>
    </location>
    <ligand>
        <name>Mn(2+)</name>
        <dbReference type="ChEBI" id="CHEBI:29035"/>
    </ligand>
</feature>
<feature type="binding site" evidence="1">
    <location>
        <position position="281"/>
    </location>
    <ligand>
        <name>Mn(2+)</name>
        <dbReference type="ChEBI" id="CHEBI:29035"/>
    </ligand>
</feature>
<feature type="lipid moiety-binding region" description="N-palmitoyl cysteine" evidence="2">
    <location>
        <position position="20"/>
    </location>
</feature>
<feature type="lipid moiety-binding region" description="S-diacylglycerol cysteine" evidence="2">
    <location>
        <position position="20"/>
    </location>
</feature>
<evidence type="ECO:0000250" key="1">
    <source>
        <dbReference type="UniProtKB" id="P0A4G2"/>
    </source>
</evidence>
<evidence type="ECO:0000255" key="2">
    <source>
        <dbReference type="PROSITE-ProRule" id="PRU00303"/>
    </source>
</evidence>
<evidence type="ECO:0000269" key="3">
    <source>
    </source>
</evidence>
<evidence type="ECO:0000269" key="4">
    <source>
    </source>
</evidence>
<evidence type="ECO:0000303" key="5">
    <source>
    </source>
</evidence>
<evidence type="ECO:0000305" key="6"/>